<organismHost>
    <name type="scientific">Homo sapiens</name>
    <name type="common">Human</name>
    <dbReference type="NCBI Taxonomy" id="9606"/>
</organismHost>
<organism>
    <name type="scientific">Vaccinia virus (strain Copenhagen)</name>
    <name type="common">VACV</name>
    <dbReference type="NCBI Taxonomy" id="10249"/>
    <lineage>
        <taxon>Viruses</taxon>
        <taxon>Varidnaviria</taxon>
        <taxon>Bamfordvirae</taxon>
        <taxon>Nucleocytoviricota</taxon>
        <taxon>Pokkesviricetes</taxon>
        <taxon>Chitovirales</taxon>
        <taxon>Poxviridae</taxon>
        <taxon>Chordopoxvirinae</taxon>
        <taxon>Orthopoxvirus</taxon>
        <taxon>Vaccinia virus</taxon>
    </lineage>
</organism>
<accession>P21093</accession>
<gene>
    <name type="primary">OPG074</name>
    <name type="ORF">O1L</name>
</gene>
<comment type="subcellular location">
    <subcellularLocation>
        <location evidence="3">Membrane</location>
        <topology evidence="3">Single-pass membrane protein</topology>
    </subcellularLocation>
</comment>
<comment type="induction">
    <text evidence="1">Expressed in the early phase of the viral replicative cycle.</text>
</comment>
<comment type="similarity">
    <text evidence="3">Belongs to the orthopoxvirus OPG074 family.</text>
</comment>
<keyword id="KW-0244">Early protein</keyword>
<keyword id="KW-0472">Membrane</keyword>
<keyword id="KW-1185">Reference proteome</keyword>
<keyword id="KW-0812">Transmembrane</keyword>
<keyword id="KW-1133">Transmembrane helix</keyword>
<name>PG074_VACCC</name>
<sequence length="666" mass="77578">MFMYPEFARKALSKLISKKLNIEKVSSKHQLVLLDYGLHGLLPKSLYLEAINSDILNVRFFPPEIINVTDIVKALQNSCRVDEYLKAVSLYHKNSLMVSGPNVVKLMIEYNLLTHSDLEWLINENVVKATYLLKINAYMINFKIDLTVDEIIDLVKDIPVGATLHLYNILNNIDLDIVLRISDEYNIPPVHDILSKLTDEEMCIKLVTKYPMDNVINFINQDVRYSPTFIKTIKDFVNKHLPTMYDGLNDYLHSVIIDEDLIEEYKIKSVAMFNLEYKTDVDTLTLDEQIFVEVNISYYDFRYRQFADEFRDYIMIKERRQITMQSGDRIRRFRRPMSLRSTIIKKDTDSLEDILAHIDNARKNSKVSIEDVERIISSFRLNPCVVRRTMLSDIDIKTKIMVLKIVKDWKSCALTLSAIKGIMVTDTINTVLSKILHHHRNVFKYLTSVENKEIAVCNCSRCLSLFYRELKSVRCDLRTDDGLLDRLYDLTRYALHGKINQNLIGQRCWGPLTEMLFNENKKKKLNNLMEYIKISDMLVYGHSIEKTLIPITDSLSFKLSVDTMSVLNDQYAKIVIFFNTIIEYIIATIYYRLTVLNNYTNVKHFVSKVLHTVMEACGVLFSYIKVNDKIEHELEEMVDKGTVPSYLYHLSINVISIILDDINGTR</sequence>
<protein>
    <recommendedName>
        <fullName>Protein OPG074</fullName>
    </recommendedName>
    <alternativeName>
        <fullName>Protein O1</fullName>
    </alternativeName>
</protein>
<feature type="chain" id="PRO_0000099638" description="Protein OPG074">
    <location>
        <begin position="1"/>
        <end position="666"/>
    </location>
</feature>
<feature type="transmembrane region" description="Helical" evidence="2">
    <location>
        <begin position="574"/>
        <end position="596"/>
    </location>
</feature>
<evidence type="ECO:0000250" key="1">
    <source>
        <dbReference type="UniProtKB" id="Q80HX1"/>
    </source>
</evidence>
<evidence type="ECO:0000255" key="2"/>
<evidence type="ECO:0000305" key="3"/>
<proteinExistence type="inferred from homology"/>
<reference key="1">
    <citation type="journal article" date="1990" name="Virology">
        <title>The complete DNA sequence of vaccinia virus.</title>
        <authorList>
            <person name="Goebel S.J."/>
            <person name="Johnson G.P."/>
            <person name="Perkus M.E."/>
            <person name="Davis S.W."/>
            <person name="Winslow J.P."/>
            <person name="Paoletti E."/>
        </authorList>
    </citation>
    <scope>NUCLEOTIDE SEQUENCE [LARGE SCALE GENOMIC DNA]</scope>
</reference>
<reference key="2">
    <citation type="journal article" date="1990" name="Virology">
        <title>Appendix to 'The complete DNA sequence of vaccinia virus'.</title>
        <authorList>
            <person name="Goebel S.J."/>
            <person name="Johnson G.P."/>
            <person name="Perkus M.E."/>
            <person name="Davis S.W."/>
            <person name="Winslow J.P."/>
            <person name="Paoletti E."/>
        </authorList>
    </citation>
    <scope>NUCLEOTIDE SEQUENCE [LARGE SCALE GENOMIC DNA]</scope>
</reference>
<dbReference type="EMBL" id="M35027">
    <property type="protein sequence ID" value="AAA48053.1"/>
    <property type="molecule type" value="Genomic_DNA"/>
</dbReference>
<dbReference type="PIR" id="D42510">
    <property type="entry name" value="D42510"/>
</dbReference>
<dbReference type="Proteomes" id="UP000008269">
    <property type="component" value="Segment"/>
</dbReference>
<dbReference type="GO" id="GO:0016020">
    <property type="term" value="C:membrane"/>
    <property type="evidence" value="ECO:0007669"/>
    <property type="project" value="UniProtKB-SubCell"/>
</dbReference>
<dbReference type="InterPro" id="IPR021155">
    <property type="entry name" value="Poxvirus_E2/O1"/>
</dbReference>
<dbReference type="InterPro" id="IPR006732">
    <property type="entry name" value="Poxvirus_O1"/>
</dbReference>
<dbReference type="Pfam" id="PF04497">
    <property type="entry name" value="Pox_E2-like"/>
    <property type="match status" value="2"/>
</dbReference>
<dbReference type="PIRSF" id="PIRSF015980">
    <property type="entry name" value="VAC_O1L"/>
    <property type="match status" value="1"/>
</dbReference>